<name>PETM_SKECO</name>
<gene>
    <name type="primary">petM</name>
    <name type="synonym">ycf31</name>
</gene>
<reference key="1">
    <citation type="submission" date="1999-01" db="EMBL/GenBank/DDBJ databases">
        <title>Plastid DNA sequences of Skeletonema costatum NIES 323.</title>
        <authorList>
            <person name="Tada N."/>
            <person name="Otsuka S."/>
            <person name="Oyaizu H."/>
            <person name="Matsumoto S."/>
        </authorList>
    </citation>
    <scope>NUCLEOTIDE SEQUENCE [GENOMIC DNA]</scope>
    <source>
        <strain>NIES-323 / Sk-85w</strain>
    </source>
</reference>
<feature type="chain" id="PRO_0000218013" description="Cytochrome b6-f complex subunit 7">
    <location>
        <begin position="1" status="less than"/>
        <end position="25"/>
    </location>
</feature>
<feature type="transmembrane region" description="Helical" evidence="2">
    <location>
        <begin position="2"/>
        <end position="22"/>
    </location>
</feature>
<feature type="non-terminal residue">
    <location>
        <position position="1"/>
    </location>
</feature>
<proteinExistence type="inferred from homology"/>
<accession>O96810</accession>
<dbReference type="EMBL" id="AJ132266">
    <property type="protein sequence ID" value="CAA10631.1"/>
    <property type="molecule type" value="Genomic_DNA"/>
</dbReference>
<dbReference type="SMR" id="O96810"/>
<dbReference type="GO" id="GO:0009535">
    <property type="term" value="C:chloroplast thylakoid membrane"/>
    <property type="evidence" value="ECO:0007669"/>
    <property type="project" value="UniProtKB-SubCell"/>
</dbReference>
<dbReference type="GO" id="GO:0009512">
    <property type="term" value="C:cytochrome b6f complex"/>
    <property type="evidence" value="ECO:0007669"/>
    <property type="project" value="InterPro"/>
</dbReference>
<dbReference type="GO" id="GO:0015979">
    <property type="term" value="P:photosynthesis"/>
    <property type="evidence" value="ECO:0007669"/>
    <property type="project" value="UniProtKB-KW"/>
</dbReference>
<dbReference type="InterPro" id="IPR012595">
    <property type="entry name" value="PetM_cyt_b6/f_cplx_su7"/>
</dbReference>
<dbReference type="Pfam" id="PF08041">
    <property type="entry name" value="PetM"/>
    <property type="match status" value="1"/>
</dbReference>
<geneLocation type="chloroplast"/>
<sequence>AAVTCIFMTLFGLSLGFALLKVQGE</sequence>
<keyword id="KW-0150">Chloroplast</keyword>
<keyword id="KW-0249">Electron transport</keyword>
<keyword id="KW-0472">Membrane</keyword>
<keyword id="KW-0602">Photosynthesis</keyword>
<keyword id="KW-0934">Plastid</keyword>
<keyword id="KW-0793">Thylakoid</keyword>
<keyword id="KW-0812">Transmembrane</keyword>
<keyword id="KW-1133">Transmembrane helix</keyword>
<keyword id="KW-0813">Transport</keyword>
<organism>
    <name type="scientific">Skeletonema costatum</name>
    <name type="common">Marine centric diatom</name>
    <name type="synonym">Melosira costata</name>
    <dbReference type="NCBI Taxonomy" id="2843"/>
    <lineage>
        <taxon>Eukaryota</taxon>
        <taxon>Sar</taxon>
        <taxon>Stramenopiles</taxon>
        <taxon>Ochrophyta</taxon>
        <taxon>Bacillariophyta</taxon>
        <taxon>Coscinodiscophyceae</taxon>
        <taxon>Thalassiosirophycidae</taxon>
        <taxon>Thalassiosirales</taxon>
        <taxon>Skeletonemataceae</taxon>
        <taxon>Skeletonema</taxon>
    </lineage>
</organism>
<comment type="function">
    <text evidence="1">Component of the cytochrome b6-f complex, which mediates electron transfer between photosystem II (PSII) and photosystem I (PSI), cyclic electron flow around PSI, and state transitions.</text>
</comment>
<comment type="subunit">
    <text evidence="1">The 4 large subunits of the cytochrome b6-f complex are cytochrome b6, subunit IV (17 kDa polypeptide, PetD), cytochrome f and the Rieske protein, while the 4 small subunits are PetG, PetL, PetM and PetN. The complex functions as a dimer (By similarity).</text>
</comment>
<comment type="subcellular location">
    <subcellularLocation>
        <location evidence="1">Plastid</location>
        <location evidence="1">Chloroplast thylakoid membrane</location>
        <topology evidence="1">Single-pass membrane protein</topology>
    </subcellularLocation>
</comment>
<comment type="similarity">
    <text evidence="3">Belongs to the PetM family.</text>
</comment>
<evidence type="ECO:0000250" key="1"/>
<evidence type="ECO:0000255" key="2"/>
<evidence type="ECO:0000305" key="3"/>
<protein>
    <recommendedName>
        <fullName>Cytochrome b6-f complex subunit 7</fullName>
    </recommendedName>
    <alternativeName>
        <fullName>Cytochrome b6-f complex subunit PetM</fullName>
    </alternativeName>
    <alternativeName>
        <fullName>Cytochrome b6-f complex subunit VII</fullName>
    </alternativeName>
</protein>